<protein>
    <recommendedName>
        <fullName evidence="1">Tryptophan synthase beta chain</fullName>
        <ecNumber evidence="1">4.2.1.20</ecNumber>
    </recommendedName>
</protein>
<name>TRPB_BACAH</name>
<comment type="function">
    <text evidence="1">The beta subunit is responsible for the synthesis of L-tryptophan from indole and L-serine.</text>
</comment>
<comment type="catalytic activity">
    <reaction evidence="1">
        <text>(1S,2R)-1-C-(indol-3-yl)glycerol 3-phosphate + L-serine = D-glyceraldehyde 3-phosphate + L-tryptophan + H2O</text>
        <dbReference type="Rhea" id="RHEA:10532"/>
        <dbReference type="ChEBI" id="CHEBI:15377"/>
        <dbReference type="ChEBI" id="CHEBI:33384"/>
        <dbReference type="ChEBI" id="CHEBI:57912"/>
        <dbReference type="ChEBI" id="CHEBI:58866"/>
        <dbReference type="ChEBI" id="CHEBI:59776"/>
        <dbReference type="EC" id="4.2.1.20"/>
    </reaction>
</comment>
<comment type="cofactor">
    <cofactor evidence="1">
        <name>pyridoxal 5'-phosphate</name>
        <dbReference type="ChEBI" id="CHEBI:597326"/>
    </cofactor>
</comment>
<comment type="pathway">
    <text evidence="1">Amino-acid biosynthesis; L-tryptophan biosynthesis; L-tryptophan from chorismate: step 5/5.</text>
</comment>
<comment type="subunit">
    <text evidence="1">Tetramer of two alpha and two beta chains.</text>
</comment>
<comment type="similarity">
    <text evidence="1">Belongs to the TrpB family.</text>
</comment>
<dbReference type="EC" id="4.2.1.20" evidence="1"/>
<dbReference type="EMBL" id="CP000485">
    <property type="protein sequence ID" value="ABK84457.1"/>
    <property type="molecule type" value="Genomic_DNA"/>
</dbReference>
<dbReference type="RefSeq" id="WP_001105008.1">
    <property type="nucleotide sequence ID" value="NC_008600.1"/>
</dbReference>
<dbReference type="SMR" id="A0RB64"/>
<dbReference type="KEGG" id="btl:BALH_1100"/>
<dbReference type="HOGENOM" id="CLU_016734_3_1_9"/>
<dbReference type="UniPathway" id="UPA00035">
    <property type="reaction ID" value="UER00044"/>
</dbReference>
<dbReference type="GO" id="GO:0005737">
    <property type="term" value="C:cytoplasm"/>
    <property type="evidence" value="ECO:0007669"/>
    <property type="project" value="TreeGrafter"/>
</dbReference>
<dbReference type="GO" id="GO:0004834">
    <property type="term" value="F:tryptophan synthase activity"/>
    <property type="evidence" value="ECO:0007669"/>
    <property type="project" value="UniProtKB-UniRule"/>
</dbReference>
<dbReference type="CDD" id="cd06446">
    <property type="entry name" value="Trp-synth_B"/>
    <property type="match status" value="1"/>
</dbReference>
<dbReference type="FunFam" id="3.40.50.1100:FF:000001">
    <property type="entry name" value="Tryptophan synthase beta chain"/>
    <property type="match status" value="1"/>
</dbReference>
<dbReference type="FunFam" id="3.40.50.1100:FF:000004">
    <property type="entry name" value="Tryptophan synthase beta chain"/>
    <property type="match status" value="1"/>
</dbReference>
<dbReference type="Gene3D" id="3.40.50.1100">
    <property type="match status" value="2"/>
</dbReference>
<dbReference type="HAMAP" id="MF_00133">
    <property type="entry name" value="Trp_synth_beta"/>
    <property type="match status" value="1"/>
</dbReference>
<dbReference type="InterPro" id="IPR006653">
    <property type="entry name" value="Trp_synth_b_CS"/>
</dbReference>
<dbReference type="InterPro" id="IPR006654">
    <property type="entry name" value="Trp_synth_beta"/>
</dbReference>
<dbReference type="InterPro" id="IPR023026">
    <property type="entry name" value="Trp_synth_beta/beta-like"/>
</dbReference>
<dbReference type="InterPro" id="IPR001926">
    <property type="entry name" value="TrpB-like_PALP"/>
</dbReference>
<dbReference type="InterPro" id="IPR036052">
    <property type="entry name" value="TrpB-like_PALP_sf"/>
</dbReference>
<dbReference type="NCBIfam" id="TIGR00263">
    <property type="entry name" value="trpB"/>
    <property type="match status" value="1"/>
</dbReference>
<dbReference type="PANTHER" id="PTHR48077:SF3">
    <property type="entry name" value="TRYPTOPHAN SYNTHASE"/>
    <property type="match status" value="1"/>
</dbReference>
<dbReference type="PANTHER" id="PTHR48077">
    <property type="entry name" value="TRYPTOPHAN SYNTHASE-RELATED"/>
    <property type="match status" value="1"/>
</dbReference>
<dbReference type="Pfam" id="PF00291">
    <property type="entry name" value="PALP"/>
    <property type="match status" value="1"/>
</dbReference>
<dbReference type="PIRSF" id="PIRSF001413">
    <property type="entry name" value="Trp_syn_beta"/>
    <property type="match status" value="1"/>
</dbReference>
<dbReference type="SUPFAM" id="SSF53686">
    <property type="entry name" value="Tryptophan synthase beta subunit-like PLP-dependent enzymes"/>
    <property type="match status" value="1"/>
</dbReference>
<dbReference type="PROSITE" id="PS00168">
    <property type="entry name" value="TRP_SYNTHASE_BETA"/>
    <property type="match status" value="1"/>
</dbReference>
<gene>
    <name evidence="1" type="primary">trpB</name>
    <name type="ordered locus">BALH_1100</name>
</gene>
<proteinExistence type="inferred from homology"/>
<sequence>MNYAYPDEKGHYGIYGGRYVPETLMQSVLELEEAYKEAMEDEAFQKELNHYLNTYVGRETPLYFAENMTEYCGGAKIYLKREDLNHTGAHKINNTIGQALLAVRMGKKKVVAETGAGQHGVATATVCALLGLECVIFMGEEDVRRQKLNVFRMELLGAKVESVAAGSGTLKDAVNEALRYWVSHVHDTHYIMGSVLGPHPFPQIVRDFQSVIGNETKKQYEELEGKLPEAVVACIGGGSNAMGMFYPFVHDEEVALYGVEAAGKGVHTEKHAATLTKGSVGVLHGSMMYLLQNEEGQIQEAHSISAGLDYPGVGPEHSLLKDIGRVSYHSITDDEALEAFQLLTKKEGIIPALESSHAVAYALKLAPQMKEDEGLVICLSGRGDKDVESIKRYMEEV</sequence>
<keyword id="KW-0028">Amino-acid biosynthesis</keyword>
<keyword id="KW-0057">Aromatic amino acid biosynthesis</keyword>
<keyword id="KW-0456">Lyase</keyword>
<keyword id="KW-0663">Pyridoxal phosphate</keyword>
<keyword id="KW-0822">Tryptophan biosynthesis</keyword>
<reference key="1">
    <citation type="journal article" date="2007" name="J. Bacteriol.">
        <title>The complete genome sequence of Bacillus thuringiensis Al Hakam.</title>
        <authorList>
            <person name="Challacombe J.F."/>
            <person name="Altherr M.R."/>
            <person name="Xie G."/>
            <person name="Bhotika S.S."/>
            <person name="Brown N."/>
            <person name="Bruce D."/>
            <person name="Campbell C.S."/>
            <person name="Campbell M.L."/>
            <person name="Chen J."/>
            <person name="Chertkov O."/>
            <person name="Cleland C."/>
            <person name="Dimitrijevic M."/>
            <person name="Doggett N.A."/>
            <person name="Fawcett J.J."/>
            <person name="Glavina T."/>
            <person name="Goodwin L.A."/>
            <person name="Green L.D."/>
            <person name="Han C.S."/>
            <person name="Hill K.K."/>
            <person name="Hitchcock P."/>
            <person name="Jackson P.J."/>
            <person name="Keim P."/>
            <person name="Kewalramani A.R."/>
            <person name="Longmire J."/>
            <person name="Lucas S."/>
            <person name="Malfatti S."/>
            <person name="Martinez D."/>
            <person name="McMurry K."/>
            <person name="Meincke L.J."/>
            <person name="Misra M."/>
            <person name="Moseman B.L."/>
            <person name="Mundt M."/>
            <person name="Munk A.C."/>
            <person name="Okinaka R.T."/>
            <person name="Parson-Quintana B."/>
            <person name="Reilly L.P."/>
            <person name="Richardson P."/>
            <person name="Robinson D.L."/>
            <person name="Saunders E."/>
            <person name="Tapia R."/>
            <person name="Tesmer J.G."/>
            <person name="Thayer N."/>
            <person name="Thompson L.S."/>
            <person name="Tice H."/>
            <person name="Ticknor L.O."/>
            <person name="Wills P.L."/>
            <person name="Gilna P."/>
            <person name="Brettin T.S."/>
        </authorList>
    </citation>
    <scope>NUCLEOTIDE SEQUENCE [LARGE SCALE GENOMIC DNA]</scope>
    <source>
        <strain>Al Hakam</strain>
    </source>
</reference>
<accession>A0RB64</accession>
<organism>
    <name type="scientific">Bacillus thuringiensis (strain Al Hakam)</name>
    <dbReference type="NCBI Taxonomy" id="412694"/>
    <lineage>
        <taxon>Bacteria</taxon>
        <taxon>Bacillati</taxon>
        <taxon>Bacillota</taxon>
        <taxon>Bacilli</taxon>
        <taxon>Bacillales</taxon>
        <taxon>Bacillaceae</taxon>
        <taxon>Bacillus</taxon>
        <taxon>Bacillus cereus group</taxon>
    </lineage>
</organism>
<feature type="chain" id="PRO_1000018321" description="Tryptophan synthase beta chain">
    <location>
        <begin position="1"/>
        <end position="397"/>
    </location>
</feature>
<feature type="modified residue" description="N6-(pyridoxal phosphate)lysine" evidence="1">
    <location>
        <position position="91"/>
    </location>
</feature>
<evidence type="ECO:0000255" key="1">
    <source>
        <dbReference type="HAMAP-Rule" id="MF_00133"/>
    </source>
</evidence>